<keyword id="KW-0963">Cytoplasm</keyword>
<keyword id="KW-0396">Initiation factor</keyword>
<keyword id="KW-0648">Protein biosynthesis</keyword>
<keyword id="KW-0694">RNA-binding</keyword>
<keyword id="KW-0699">rRNA-binding</keyword>
<organism>
    <name type="scientific">Staphylococcus aureus (strain USA300 / TCH1516)</name>
    <dbReference type="NCBI Taxonomy" id="451516"/>
    <lineage>
        <taxon>Bacteria</taxon>
        <taxon>Bacillati</taxon>
        <taxon>Bacillota</taxon>
        <taxon>Bacilli</taxon>
        <taxon>Bacillales</taxon>
        <taxon>Staphylococcaceae</taxon>
        <taxon>Staphylococcus</taxon>
    </lineage>
</organism>
<proteinExistence type="inferred from homology"/>
<protein>
    <recommendedName>
        <fullName evidence="1">Translation initiation factor IF-1</fullName>
    </recommendedName>
</protein>
<gene>
    <name evidence="1" type="primary">infA</name>
    <name type="ordered locus">USA300HOU_2219</name>
</gene>
<evidence type="ECO:0000255" key="1">
    <source>
        <dbReference type="HAMAP-Rule" id="MF_00075"/>
    </source>
</evidence>
<dbReference type="EMBL" id="CP000730">
    <property type="protein sequence ID" value="ABX30212.1"/>
    <property type="molecule type" value="Genomic_DNA"/>
</dbReference>
<dbReference type="RefSeq" id="WP_001118443.1">
    <property type="nucleotide sequence ID" value="NC_010079.1"/>
</dbReference>
<dbReference type="SMR" id="A8Z335"/>
<dbReference type="GeneID" id="98346540"/>
<dbReference type="KEGG" id="sax:USA300HOU_2219"/>
<dbReference type="HOGENOM" id="CLU_151267_1_0_9"/>
<dbReference type="GO" id="GO:0005829">
    <property type="term" value="C:cytosol"/>
    <property type="evidence" value="ECO:0007669"/>
    <property type="project" value="TreeGrafter"/>
</dbReference>
<dbReference type="GO" id="GO:0043022">
    <property type="term" value="F:ribosome binding"/>
    <property type="evidence" value="ECO:0007669"/>
    <property type="project" value="UniProtKB-UniRule"/>
</dbReference>
<dbReference type="GO" id="GO:0019843">
    <property type="term" value="F:rRNA binding"/>
    <property type="evidence" value="ECO:0007669"/>
    <property type="project" value="UniProtKB-UniRule"/>
</dbReference>
<dbReference type="GO" id="GO:0003743">
    <property type="term" value="F:translation initiation factor activity"/>
    <property type="evidence" value="ECO:0007669"/>
    <property type="project" value="UniProtKB-UniRule"/>
</dbReference>
<dbReference type="CDD" id="cd04451">
    <property type="entry name" value="S1_IF1"/>
    <property type="match status" value="1"/>
</dbReference>
<dbReference type="FunFam" id="2.40.50.140:FF:000002">
    <property type="entry name" value="Translation initiation factor IF-1"/>
    <property type="match status" value="1"/>
</dbReference>
<dbReference type="Gene3D" id="2.40.50.140">
    <property type="entry name" value="Nucleic acid-binding proteins"/>
    <property type="match status" value="1"/>
</dbReference>
<dbReference type="HAMAP" id="MF_00075">
    <property type="entry name" value="IF_1"/>
    <property type="match status" value="1"/>
</dbReference>
<dbReference type="InterPro" id="IPR012340">
    <property type="entry name" value="NA-bd_OB-fold"/>
</dbReference>
<dbReference type="InterPro" id="IPR006196">
    <property type="entry name" value="RNA-binding_domain_S1_IF1"/>
</dbReference>
<dbReference type="InterPro" id="IPR003029">
    <property type="entry name" value="S1_domain"/>
</dbReference>
<dbReference type="InterPro" id="IPR004368">
    <property type="entry name" value="TIF_IF1"/>
</dbReference>
<dbReference type="NCBIfam" id="TIGR00008">
    <property type="entry name" value="infA"/>
    <property type="match status" value="1"/>
</dbReference>
<dbReference type="PANTHER" id="PTHR33370">
    <property type="entry name" value="TRANSLATION INITIATION FACTOR IF-1, CHLOROPLASTIC"/>
    <property type="match status" value="1"/>
</dbReference>
<dbReference type="PANTHER" id="PTHR33370:SF1">
    <property type="entry name" value="TRANSLATION INITIATION FACTOR IF-1, CHLOROPLASTIC"/>
    <property type="match status" value="1"/>
</dbReference>
<dbReference type="Pfam" id="PF01176">
    <property type="entry name" value="eIF-1a"/>
    <property type="match status" value="1"/>
</dbReference>
<dbReference type="SMART" id="SM00316">
    <property type="entry name" value="S1"/>
    <property type="match status" value="1"/>
</dbReference>
<dbReference type="SUPFAM" id="SSF50249">
    <property type="entry name" value="Nucleic acid-binding proteins"/>
    <property type="match status" value="1"/>
</dbReference>
<dbReference type="PROSITE" id="PS50832">
    <property type="entry name" value="S1_IF1_TYPE"/>
    <property type="match status" value="1"/>
</dbReference>
<name>IF1_STAAT</name>
<reference key="1">
    <citation type="journal article" date="2007" name="BMC Microbiol.">
        <title>Subtle genetic changes enhance virulence of methicillin resistant and sensitive Staphylococcus aureus.</title>
        <authorList>
            <person name="Highlander S.K."/>
            <person name="Hulten K.G."/>
            <person name="Qin X."/>
            <person name="Jiang H."/>
            <person name="Yerrapragada S."/>
            <person name="Mason E.O. Jr."/>
            <person name="Shang Y."/>
            <person name="Williams T.M."/>
            <person name="Fortunov R.M."/>
            <person name="Liu Y."/>
            <person name="Igboeli O."/>
            <person name="Petrosino J."/>
            <person name="Tirumalai M."/>
            <person name="Uzman A."/>
            <person name="Fox G.E."/>
            <person name="Cardenas A.M."/>
            <person name="Muzny D.M."/>
            <person name="Hemphill L."/>
            <person name="Ding Y."/>
            <person name="Dugan S."/>
            <person name="Blyth P.R."/>
            <person name="Buhay C.J."/>
            <person name="Dinh H.H."/>
            <person name="Hawes A.C."/>
            <person name="Holder M."/>
            <person name="Kovar C.L."/>
            <person name="Lee S.L."/>
            <person name="Liu W."/>
            <person name="Nazareth L.V."/>
            <person name="Wang Q."/>
            <person name="Zhou J."/>
            <person name="Kaplan S.L."/>
            <person name="Weinstock G.M."/>
        </authorList>
    </citation>
    <scope>NUCLEOTIDE SEQUENCE [LARGE SCALE GENOMIC DNA]</scope>
    <source>
        <strain>USA300 / TCH1516</strain>
    </source>
</reference>
<accession>A8Z335</accession>
<feature type="chain" id="PRO_0000338933" description="Translation initiation factor IF-1">
    <location>
        <begin position="1"/>
        <end position="72"/>
    </location>
</feature>
<feature type="domain" description="S1-like" evidence="1">
    <location>
        <begin position="1"/>
        <end position="72"/>
    </location>
</feature>
<sequence>MAKQDVIELEGTVLDTLPNAMFKVELENGHEILAHVSGKIRMNYIRILPGDKVTVEMSPYDLTRGRITYRYK</sequence>
<comment type="function">
    <text evidence="1">One of the essential components for the initiation of protein synthesis. Stabilizes the binding of IF-2 and IF-3 on the 30S subunit to which N-formylmethionyl-tRNA(fMet) subsequently binds. Helps modulate mRNA selection, yielding the 30S pre-initiation complex (PIC). Upon addition of the 50S ribosomal subunit IF-1, IF-2 and IF-3 are released leaving the mature 70S translation initiation complex.</text>
</comment>
<comment type="subunit">
    <text evidence="1">Component of the 30S ribosomal translation pre-initiation complex which assembles on the 30S ribosome in the order IF-2 and IF-3, IF-1 and N-formylmethionyl-tRNA(fMet); mRNA recruitment can occur at any time during PIC assembly.</text>
</comment>
<comment type="subcellular location">
    <subcellularLocation>
        <location evidence="1">Cytoplasm</location>
    </subcellularLocation>
</comment>
<comment type="similarity">
    <text evidence="1">Belongs to the IF-1 family.</text>
</comment>